<evidence type="ECO:0000250" key="1"/>
<evidence type="ECO:0000250" key="2">
    <source>
        <dbReference type="UniProtKB" id="P03523"/>
    </source>
</evidence>
<evidence type="ECO:0000250" key="3">
    <source>
        <dbReference type="UniProtKB" id="P28887"/>
    </source>
</evidence>
<evidence type="ECO:0000255" key="4">
    <source>
        <dbReference type="PROSITE-ProRule" id="PRU00539"/>
    </source>
</evidence>
<evidence type="ECO:0000255" key="5">
    <source>
        <dbReference type="PROSITE-ProRule" id="PRU00923"/>
    </source>
</evidence>
<evidence type="ECO:0000256" key="6">
    <source>
        <dbReference type="SAM" id="MobiDB-lite"/>
    </source>
</evidence>
<evidence type="ECO:0000305" key="7"/>
<dbReference type="EC" id="2.7.7.48" evidence="3"/>
<dbReference type="EC" id="3.6.1.-" evidence="2"/>
<dbReference type="EC" id="2.7.7.88" evidence="2"/>
<dbReference type="EC" id="2.1.1.375" evidence="2"/>
<dbReference type="EMBL" id="X68494">
    <property type="protein sequence ID" value="CAA48508.1"/>
    <property type="molecule type" value="Genomic_RNA"/>
</dbReference>
<dbReference type="EMBL" id="Z29337">
    <property type="protein sequence ID" value="CAA82542.1"/>
    <property type="molecule type" value="Genomic_RNA"/>
</dbReference>
<dbReference type="PIR" id="S44054">
    <property type="entry name" value="S44054"/>
</dbReference>
<dbReference type="SMR" id="P35262"/>
<dbReference type="Proteomes" id="UP000007772">
    <property type="component" value="Genome"/>
</dbReference>
<dbReference type="GO" id="GO:0030430">
    <property type="term" value="C:host cell cytoplasm"/>
    <property type="evidence" value="ECO:0007669"/>
    <property type="project" value="UniProtKB-SubCell"/>
</dbReference>
<dbReference type="GO" id="GO:0044423">
    <property type="term" value="C:virion component"/>
    <property type="evidence" value="ECO:0007669"/>
    <property type="project" value="UniProtKB-KW"/>
</dbReference>
<dbReference type="GO" id="GO:0005524">
    <property type="term" value="F:ATP binding"/>
    <property type="evidence" value="ECO:0007669"/>
    <property type="project" value="UniProtKB-KW"/>
</dbReference>
<dbReference type="GO" id="GO:0003924">
    <property type="term" value="F:GTPase activity"/>
    <property type="evidence" value="ECO:0007669"/>
    <property type="project" value="RHEA"/>
</dbReference>
<dbReference type="GO" id="GO:0004482">
    <property type="term" value="F:mRNA 5'-cap (guanine-N7-)-methyltransferase activity"/>
    <property type="evidence" value="ECO:0007669"/>
    <property type="project" value="InterPro"/>
</dbReference>
<dbReference type="GO" id="GO:0003968">
    <property type="term" value="F:RNA-directed RNA polymerase activity"/>
    <property type="evidence" value="ECO:0007669"/>
    <property type="project" value="UniProtKB-KW"/>
</dbReference>
<dbReference type="GO" id="GO:0039689">
    <property type="term" value="P:negative stranded viral RNA replication"/>
    <property type="evidence" value="ECO:0000250"/>
    <property type="project" value="UniProtKB"/>
</dbReference>
<dbReference type="GO" id="GO:0039697">
    <property type="term" value="P:negative stranded viral RNA transcription"/>
    <property type="evidence" value="ECO:0000250"/>
    <property type="project" value="UniProtKB"/>
</dbReference>
<dbReference type="InterPro" id="IPR039736">
    <property type="entry name" value="L_poly_C"/>
</dbReference>
<dbReference type="InterPro" id="IPR026890">
    <property type="entry name" value="Mononeg_mRNAcap"/>
</dbReference>
<dbReference type="InterPro" id="IPR014023">
    <property type="entry name" value="Mononeg_RNA_pol_cat"/>
</dbReference>
<dbReference type="InterPro" id="IPR025786">
    <property type="entry name" value="Mononega_L_MeTrfase"/>
</dbReference>
<dbReference type="InterPro" id="IPR017235">
    <property type="entry name" value="RNA-dir_pol_L_filovirus"/>
</dbReference>
<dbReference type="NCBIfam" id="TIGR04198">
    <property type="entry name" value="paramyx_RNAcap"/>
    <property type="match status" value="1"/>
</dbReference>
<dbReference type="Pfam" id="PF14318">
    <property type="entry name" value="Mononeg_mRNAcap"/>
    <property type="match status" value="1"/>
</dbReference>
<dbReference type="Pfam" id="PF00946">
    <property type="entry name" value="Mononeg_RNA_pol"/>
    <property type="match status" value="1"/>
</dbReference>
<dbReference type="PIRSF" id="PIRSF037548">
    <property type="entry name" value="RNA_pol_Filoviridae"/>
    <property type="match status" value="1"/>
</dbReference>
<dbReference type="PROSITE" id="PS50526">
    <property type="entry name" value="RDRP_SSRNA_NEG_NONSEG"/>
    <property type="match status" value="1"/>
</dbReference>
<dbReference type="PROSITE" id="PS51590">
    <property type="entry name" value="SAM_MT_MNV_L"/>
    <property type="match status" value="1"/>
</dbReference>
<organismHost>
    <name type="scientific">Chlorocebus aethiops</name>
    <name type="common">Green monkey</name>
    <name type="synonym">Cercopithecus aethiops</name>
    <dbReference type="NCBI Taxonomy" id="9534"/>
</organismHost>
<organismHost>
    <name type="scientific">Homo sapiens</name>
    <name type="common">Human</name>
    <dbReference type="NCBI Taxonomy" id="9606"/>
</organismHost>
<organismHost>
    <name type="scientific">Rousettus aegyptiacus</name>
    <name type="common">Egyptian fruit bat</name>
    <name type="synonym">Pteropus aegyptiacus</name>
    <dbReference type="NCBI Taxonomy" id="9407"/>
</organismHost>
<protein>
    <recommendedName>
        <fullName>RNA-directed RNA polymerase L</fullName>
        <shortName>Protein L</shortName>
    </recommendedName>
    <alternativeName>
        <fullName>Large structural protein</fullName>
    </alternativeName>
    <alternativeName>
        <fullName>Replicase</fullName>
    </alternativeName>
    <alternativeName>
        <fullName>Transcriptase</fullName>
    </alternativeName>
    <domain>
        <recommendedName>
            <fullName>RNA-directed RNA polymerase</fullName>
            <ecNumber evidence="3">2.7.7.48</ecNumber>
        </recommendedName>
    </domain>
    <domain>
        <recommendedName>
            <fullName evidence="2">GTP phosphohydrolase</fullName>
            <ecNumber evidence="2">3.6.1.-</ecNumber>
        </recommendedName>
    </domain>
    <domain>
        <recommendedName>
            <fullName evidence="7">GDP polyribonucleotidyltransferase</fullName>
            <ecNumber evidence="2">2.7.7.88</ecNumber>
        </recommendedName>
        <alternativeName>
            <fullName evidence="7">PRNTase</fullName>
        </alternativeName>
    </domain>
    <domain>
        <recommendedName>
            <fullName evidence="7">mRNA cap methyltransferase</fullName>
            <ecNumber evidence="2">2.1.1.375</ecNumber>
        </recommendedName>
        <alternativeName>
            <fullName evidence="2">mRNA (guanine-N(7)-)-methyltransferase</fullName>
            <shortName evidence="2">G-N7-MTase</shortName>
        </alternativeName>
        <alternativeName>
            <fullName evidence="2">mRNA (nucleoside-2'-O-)-methyltransferase</fullName>
            <shortName evidence="2">N1-2'-O-MTase</shortName>
        </alternativeName>
    </domain>
</protein>
<comment type="function">
    <text evidence="2">RNA-directed RNA polymerase that catalyzes the transcription of viral mRNAs, their capping and polyadenylation. The template is composed of the viral RNA tightly encapsidated by the nucleoprotein (N). The viral polymerase binds to the genomic RNA at the 3' leader promoter, and transcribes subsequently all viral mRNAs with a decreasing efficiency. The first gene is the most transcribed, and the last the least transcribed. The viral phosphoprotein acts as a processivity factor. Capping is concomitant with initiation of mRNA transcription. Indeed, a GDP polyribonucleotidyl transferase (PRNTase) adds the cap structure when the nascent RNA chain length has reached few nucleotides. Ribose 2'-O methylation of viral mRNA cap precedes and facilitates subsequent guanine-N-7 methylation, both activities being carried by the viral polymerase. Polyadenylation of mRNAs occur by a stuttering mechanism at a slipery stop site present at the end viral genes. After finishing transcription of a mRNA, the polymerase can resume transcription of the downstream gene.</text>
</comment>
<comment type="function">
    <text evidence="2">RNA-directed RNA polymerase that catalyzes the replication of viral genomic RNA. The template is composed of the viral RNA tightly encapsidated by the nucleoprotein (N). The replicase mode is dependent on intracellular N protein concentration. In this mode, the polymerase replicates the whole viral genome without recognizing transcriptional signals, and the replicated genome is not caped or polyadenylated.</text>
</comment>
<comment type="catalytic activity">
    <reaction evidence="4">
        <text>RNA(n) + a ribonucleoside 5'-triphosphate = RNA(n+1) + diphosphate</text>
        <dbReference type="Rhea" id="RHEA:21248"/>
        <dbReference type="Rhea" id="RHEA-COMP:14527"/>
        <dbReference type="Rhea" id="RHEA-COMP:17342"/>
        <dbReference type="ChEBI" id="CHEBI:33019"/>
        <dbReference type="ChEBI" id="CHEBI:61557"/>
        <dbReference type="ChEBI" id="CHEBI:140395"/>
        <dbReference type="EC" id="2.7.7.48"/>
    </reaction>
</comment>
<comment type="catalytic activity">
    <reaction evidence="2">
        <text>a 5'-end (5'-triphosphoguanosine)-adenylyl-adenylyl-cytidylyl-adenosine in mRNA + 2 S-adenosyl-L-methionine = a 5'-end (N(7)-methyl 5'-triphosphoguanosine)-(2'-O-methyladenylyl)-adenylyl-cytidylyl-adenosine in mRNA + 2 S-adenosyl-L-homocysteine + H(+)</text>
        <dbReference type="Rhea" id="RHEA:65376"/>
        <dbReference type="Rhea" id="RHEA-COMP:16797"/>
        <dbReference type="Rhea" id="RHEA-COMP:16798"/>
        <dbReference type="ChEBI" id="CHEBI:15378"/>
        <dbReference type="ChEBI" id="CHEBI:57856"/>
        <dbReference type="ChEBI" id="CHEBI:59789"/>
        <dbReference type="ChEBI" id="CHEBI:156483"/>
        <dbReference type="ChEBI" id="CHEBI:156484"/>
        <dbReference type="EC" id="2.1.1.375"/>
    </reaction>
</comment>
<comment type="catalytic activity">
    <reaction evidence="2">
        <text>a 5'-end (5'-triphosphoguanosine)-adenylyl-adenylyl-cytidylyl-adenosine in mRNA + S-adenosyl-L-methionine = a 5'-end (5'-triphosphoguanosine)-(2'-O-methyladenylyl)-adenylyl-cytidylyl-adenosine in mRNA + S-adenosyl-L-homocysteine + H(+)</text>
        <dbReference type="Rhea" id="RHEA:65380"/>
        <dbReference type="Rhea" id="RHEA-COMP:16797"/>
        <dbReference type="Rhea" id="RHEA-COMP:16801"/>
        <dbReference type="ChEBI" id="CHEBI:15378"/>
        <dbReference type="ChEBI" id="CHEBI:57856"/>
        <dbReference type="ChEBI" id="CHEBI:59789"/>
        <dbReference type="ChEBI" id="CHEBI:156482"/>
        <dbReference type="ChEBI" id="CHEBI:156484"/>
    </reaction>
</comment>
<comment type="catalytic activity">
    <reaction evidence="3">
        <text>a 5'-end triphospho-adenylyl-adenylyl-cytidylyl-adenosine in mRNA + GDP + H(+) = a 5'-end (5'-triphosphoguanosine)-adenylyl-adenylyl-cytidylyl-adenosine in mRNA + diphosphate</text>
        <dbReference type="Rhea" id="RHEA:65436"/>
        <dbReference type="Rhea" id="RHEA-COMP:16797"/>
        <dbReference type="Rhea" id="RHEA-COMP:16799"/>
        <dbReference type="ChEBI" id="CHEBI:15378"/>
        <dbReference type="ChEBI" id="CHEBI:33019"/>
        <dbReference type="ChEBI" id="CHEBI:58189"/>
        <dbReference type="ChEBI" id="CHEBI:156484"/>
        <dbReference type="ChEBI" id="CHEBI:156503"/>
        <dbReference type="EC" id="2.7.7.88"/>
    </reaction>
</comment>
<comment type="catalytic activity">
    <reaction evidence="2">
        <text>a 5'-end (5'-triphosphoguanosine)-(2'-O-methyladenylyl)-adenylyl-cytidylyl-adenosine in mRNA + S-adenosyl-L-methionine = a 5'-end (N(7)-methyl 5'-triphosphoguanosine)-(2'-O-methyladenylyl)-adenylyl-cytidylyl-adenosine in mRNA + S-adenosyl-L-homocysteine</text>
        <dbReference type="Rhea" id="RHEA:65440"/>
        <dbReference type="Rhea" id="RHEA-COMP:16798"/>
        <dbReference type="Rhea" id="RHEA-COMP:16801"/>
        <dbReference type="ChEBI" id="CHEBI:57856"/>
        <dbReference type="ChEBI" id="CHEBI:59789"/>
        <dbReference type="ChEBI" id="CHEBI:156482"/>
        <dbReference type="ChEBI" id="CHEBI:156483"/>
    </reaction>
</comment>
<comment type="catalytic activity">
    <reaction evidence="3">
        <text>GTP + H2O = GDP + phosphate + H(+)</text>
        <dbReference type="Rhea" id="RHEA:19669"/>
        <dbReference type="ChEBI" id="CHEBI:15377"/>
        <dbReference type="ChEBI" id="CHEBI:15378"/>
        <dbReference type="ChEBI" id="CHEBI:37565"/>
        <dbReference type="ChEBI" id="CHEBI:43474"/>
        <dbReference type="ChEBI" id="CHEBI:58189"/>
    </reaction>
</comment>
<comment type="subcellular location">
    <subcellularLocation>
        <location>Host cytoplasm</location>
    </subcellularLocation>
    <subcellularLocation>
        <location evidence="1">Virion</location>
    </subcellularLocation>
</comment>
<proteinExistence type="inferred from homology"/>
<accession>P35262</accession>
<organism>
    <name type="scientific">Lake Victoria marburgvirus (strain Popp-67)</name>
    <name type="common">MARV</name>
    <name type="synonym">Marburg virus (strain West Germany/Popp/1967)</name>
    <dbReference type="NCBI Taxonomy" id="33728"/>
    <lineage>
        <taxon>Viruses</taxon>
        <taxon>Riboviria</taxon>
        <taxon>Orthornavirae</taxon>
        <taxon>Negarnaviricota</taxon>
        <taxon>Haploviricotina</taxon>
        <taxon>Monjiviricetes</taxon>
        <taxon>Mononegavirales</taxon>
        <taxon>Filoviridae</taxon>
        <taxon>Orthomarburgvirus</taxon>
        <taxon>Orthomarburgvirus marburgense</taxon>
    </lineage>
</organism>
<name>L_MABVP</name>
<keyword id="KW-0067">ATP-binding</keyword>
<keyword id="KW-1035">Host cytoplasm</keyword>
<keyword id="KW-0378">Hydrolase</keyword>
<keyword id="KW-0489">Methyltransferase</keyword>
<keyword id="KW-0506">mRNA capping</keyword>
<keyword id="KW-0507">mRNA processing</keyword>
<keyword id="KW-0511">Multifunctional enzyme</keyword>
<keyword id="KW-0547">Nucleotide-binding</keyword>
<keyword id="KW-0548">Nucleotidyltransferase</keyword>
<keyword id="KW-0696">RNA-directed RNA polymerase</keyword>
<keyword id="KW-0949">S-adenosyl-L-methionine</keyword>
<keyword id="KW-0808">Transferase</keyword>
<keyword id="KW-0693">Viral RNA replication</keyword>
<keyword id="KW-0946">Virion</keyword>
<sequence length="2331" mass="266638">MQHPTQYPDARLSSPIILDQCDLLARSLGLYSHYSHNPKLRNCRIPHHIYRLRNSTALKTFLQNCSILTVPFHSIWDHILTSIQYDAINHVDDFKYLLPSELVKYANWDNEFLKAYLNKILGLDHVFPASARSQWEDFSPKENPYYWGMLLLVHLSQLARRIKGQRGSLRSNWKFIGTDLELFGIADFIIFKVPVKTIIRNAVSLQASKPGLRVWYRDQNLTPYLCDDEFIVSVASYECFIMIKDVFIERYNTWEICARAWLEDSDGADYLPLDVLGELYNQGDQIIAMYLEDGFKLIKHLEPLCVSCIQTHGIFTPGKYWFQSQRIESYYEELCSLNWKFKISGNKAECAQNFIKTIIQGKLTPQQYCELFSLQKHWGHPVLYIDVALDKVKKHAQSVKILKPKVMFETFCVFKFIVAKNHYHSQGSWYKTTMDLHLTPYLRQHIVSNSFPSQAEIYQHLWEWYFVEHEPLFSTKIISDLSIFIKDRATAVNQECWDSVFDRSVLGYNPPVRFQSKRVPEQFLGQADFSLNQILDFAEKLEYLAPSYRNFSFSLKEKELNIGRTFGKLPYRVRNVQTLAEALLADGLAKAFPSNMMVVTEREQKEALLHQASWHHNSASIGENAIVRGASFVTDLEKYNLAFRYEFTRHFIDYCNRCYGVKNLFDWMHFLIPLCYMHVSDFYSPPHCVTEDNRNNPPDCANAYHYHLGGIEGLQQKLWTCISCAQITLVELKTKLKLKSSVMGDNQCITTLSLFPIDAPDDYQENEAELNAARVAVELAITTGYDGIFLKPEETFVHSGFIYFGKKQYLNGVQLPQSLKTMARCGPLSDSIFDDLQGSLASIGTSFERGTSETRHIFPSRWIASFHSMLAINLLNQNHLGFPLGFSIDISCFKKPLTFSEKLIALITPQVLGGLSFLNPEKLFYRNISDPLTSGLFQLKNALEFLEKEELFYILIAKKPGLADASDFVMNPLGLNVPGSREIITFLRQTVRENITITSQNRIINSLFHIGSDLEDQRVCEWLLSSNPVMSRFAADIFSRTPSGKRLQVLGYLEGTRTLLASRTISLTTEGTMLMKLRELTRNRWKSWFSYIDALDDDLSESLEKFTCTVDIANFLRAYSWLDVLKGKRLIGATLPCLLEQFKVKWINLSEDLREQFNMSSESESTINLLPYDCKELRLGRSNDTELNYVSCALDRKVVQKHPSVNRLAWTIGNRAPYIGSRTEDKIGYPPLRVNCPSAALKEAIEMVSRLLWVTQGTADREKLLIPLLNSRVNLDYQTVLNFLPTHYSGNIVHRYNDQYGQHSFMANRMSNTSTRAIISTNTLGKYAGGGQAAVDSNIIFQNTINLGVAVLDIALSLAKLSSASNVTFRLMLNKCCTRHVPSEYLFFDKPLDVDLNKYMDNELVYDNDPLCSGIKGRLGRVSRSTLSLSLNVSDIGSYDFPTIAAWTLGETIVGSIFSDESSQSTDPISSGCTKTFVTHFLVYPVESIFYAFGANLIVESLSLSRIKSIKNLSDLTFLISSTIRNLSHRSLRILQSTFRHELVLTRLAHHIPLISLMLGGSAGEKSSSDAVRLFLTASYQNFINNFSCLMKKGQSSLPVWLYFPSEGQQLKPILKILQRLSDLLSPDKVQKHQILADTCCPIDSFWVYPSKSTRTNHYYASLNYWRDKANKVKNTPFSHLINCSFLELSSHTSSVSSNQQVTNSKYIVHPENIPEINARTKLIDYGSTALQGMDIKMPLSEQNLVGNCRPSKGIRFKDNPKTTKHDQGFVGKDSSPRPMSPEDNMQTPAYIHSSPPYQTLTKSPDVHEDFDASKVILNSEINNLNLTDCTLNTKSLTTPTGTEILGISPFRSSRYSSTSRERSRLSREQASYLYVDCSNIPSISLDPGFQNMSDQNQVQMLINTYKRDLHACFDSNQFCRFTGVVSSMHYKLYDLLPPGELRKAICLAEGEGSGARLLLKWKKTDYLFFNTLATDSQQEAEILSGRVIPRMLYNIDRLNALLESRRLILNNLTIQITDITSPLWLDSVIQYLPEDSDILTMDAETTKDETREQLYKTIVNIWTRTSPNIPKISIIKVFLLDYEGTLFLMRNAIQYYGQVQLKKPYSSNAKNSEWYLCCGKRRIQRLKIDFSDQVGIFLICKAMSRQRQAIPYWLKHIEKNYPASLHKFFLTLGFPSLESSFCHRYTIPFSEGKALFHKVQSYVRQGKQHLHSLMLDYENNSPLLDLRNHFICSLRGKITKYYNDILKLNLVIKAVEKGKNWSQLVETLPNMHSVCIVHVDHECFGCEKRLLLKLDFIRNTKIAEQKLLNRVIGYILFFPFGLFKSESLTA</sequence>
<feature type="chain" id="PRO_0000222170" description="RNA-directed RNA polymerase L">
    <location>
        <begin position="1"/>
        <end position="2331"/>
    </location>
</feature>
<feature type="domain" description="RdRp catalytic" evidence="4">
    <location>
        <begin position="628"/>
        <end position="812"/>
    </location>
</feature>
<feature type="domain" description="Mononegavirus-type SAM-dependent 2'-O-MTase" evidence="5">
    <location>
        <begin position="1921"/>
        <end position="2118"/>
    </location>
</feature>
<feature type="region of interest" description="Disordered" evidence="6">
    <location>
        <begin position="1753"/>
        <end position="1782"/>
    </location>
</feature>
<feature type="compositionally biased region" description="Basic and acidic residues" evidence="6">
    <location>
        <begin position="1756"/>
        <end position="1768"/>
    </location>
</feature>
<reference key="1">
    <citation type="journal article" date="1995" name="Arch. Virol.">
        <title>The complete nucleotide sequence of the Popp (1967) strain of Marburg virus: a comparison with the Musoke (1980) strain.</title>
        <authorList>
            <person name="Bukreyev A.A."/>
            <person name="Volchkov V.E."/>
            <person name="Blinov V.M."/>
            <person name="Dryga S.A."/>
            <person name="Netesov S.V."/>
        </authorList>
    </citation>
    <scope>NUCLEOTIDE SEQUENCE [GENOMIC RNA]</scope>
</reference>
<gene>
    <name type="primary">L</name>
</gene>